<protein>
    <recommendedName>
        <fullName evidence="1">NADPH-dependent 7-cyano-7-deazaguanine reductase</fullName>
        <ecNumber evidence="1">1.7.1.13</ecNumber>
    </recommendedName>
    <alternativeName>
        <fullName evidence="1">7-cyano-7-carbaguanine reductase</fullName>
    </alternativeName>
    <alternativeName>
        <fullName evidence="1">NADPH-dependent nitrile oxidoreductase</fullName>
    </alternativeName>
    <alternativeName>
        <fullName evidence="1">PreQ(0) reductase</fullName>
    </alternativeName>
</protein>
<organism>
    <name type="scientific">Pseudomonas paraeruginosa (strain DSM 24068 / PA7)</name>
    <name type="common">Pseudomonas aeruginosa (strain PA7)</name>
    <dbReference type="NCBI Taxonomy" id="381754"/>
    <lineage>
        <taxon>Bacteria</taxon>
        <taxon>Pseudomonadati</taxon>
        <taxon>Pseudomonadota</taxon>
        <taxon>Gammaproteobacteria</taxon>
        <taxon>Pseudomonadales</taxon>
        <taxon>Pseudomonadaceae</taxon>
        <taxon>Pseudomonas</taxon>
        <taxon>Pseudomonas paraeruginosa</taxon>
    </lineage>
</organism>
<sequence>MHHPAEHSPLGKTSEYVSRYTPSLLFPIARAAKWAELGLSAATLPYRGVDIWNCYELSWLTPAGKPVVAIGEFSIPADSPNIIESKSFKLYLNSLNQSSFDSRDALRAVLEQDLSVAAGAAVGVRLRSLDEVAEEGVGRLPGRCIDELEIAVDGYERPRPELLRCDAGRFVEEQLYSHLLKSNCPVTGQPDWGTLVVDYRGPALDPASLLAYLVSFRQHQDFHEQCVERIFLDLRRLLQPQALTVYARYVRRGGLDINPYRSLVDVAPDNRRLVRQ</sequence>
<proteinExistence type="inferred from homology"/>
<comment type="function">
    <text evidence="1">Catalyzes the NADPH-dependent reduction of 7-cyano-7-deazaguanine (preQ0) to 7-aminomethyl-7-deazaguanine (preQ1).</text>
</comment>
<comment type="catalytic activity">
    <reaction evidence="1">
        <text>7-aminomethyl-7-carbaguanine + 2 NADP(+) = 7-cyano-7-deazaguanine + 2 NADPH + 3 H(+)</text>
        <dbReference type="Rhea" id="RHEA:13409"/>
        <dbReference type="ChEBI" id="CHEBI:15378"/>
        <dbReference type="ChEBI" id="CHEBI:45075"/>
        <dbReference type="ChEBI" id="CHEBI:57783"/>
        <dbReference type="ChEBI" id="CHEBI:58349"/>
        <dbReference type="ChEBI" id="CHEBI:58703"/>
        <dbReference type="EC" id="1.7.1.13"/>
    </reaction>
</comment>
<comment type="pathway">
    <text evidence="1">tRNA modification; tRNA-queuosine biosynthesis.</text>
</comment>
<comment type="subunit">
    <text evidence="1">Homodimer.</text>
</comment>
<comment type="subcellular location">
    <subcellularLocation>
        <location evidence="1">Cytoplasm</location>
    </subcellularLocation>
</comment>
<comment type="similarity">
    <text evidence="1">Belongs to the GTP cyclohydrolase I family. QueF type 2 subfamily.</text>
</comment>
<reference key="1">
    <citation type="submission" date="2007-06" db="EMBL/GenBank/DDBJ databases">
        <authorList>
            <person name="Dodson R.J."/>
            <person name="Harkins D."/>
            <person name="Paulsen I.T."/>
        </authorList>
    </citation>
    <scope>NUCLEOTIDE SEQUENCE [LARGE SCALE GENOMIC DNA]</scope>
    <source>
        <strain>DSM 24068 / PA7</strain>
    </source>
</reference>
<keyword id="KW-0963">Cytoplasm</keyword>
<keyword id="KW-0521">NADP</keyword>
<keyword id="KW-0560">Oxidoreductase</keyword>
<keyword id="KW-0671">Queuosine biosynthesis</keyword>
<evidence type="ECO:0000255" key="1">
    <source>
        <dbReference type="HAMAP-Rule" id="MF_00817"/>
    </source>
</evidence>
<dbReference type="EC" id="1.7.1.13" evidence="1"/>
<dbReference type="EMBL" id="CP000744">
    <property type="protein sequence ID" value="ABR83812.1"/>
    <property type="molecule type" value="Genomic_DNA"/>
</dbReference>
<dbReference type="RefSeq" id="WP_012075286.1">
    <property type="nucleotide sequence ID" value="NC_009656.1"/>
</dbReference>
<dbReference type="SMR" id="A6V3T3"/>
<dbReference type="KEGG" id="pap:PSPA7_2351"/>
<dbReference type="HOGENOM" id="CLU_054738_0_0_6"/>
<dbReference type="UniPathway" id="UPA00392"/>
<dbReference type="Proteomes" id="UP000001582">
    <property type="component" value="Chromosome"/>
</dbReference>
<dbReference type="GO" id="GO:0005737">
    <property type="term" value="C:cytoplasm"/>
    <property type="evidence" value="ECO:0007669"/>
    <property type="project" value="UniProtKB-SubCell"/>
</dbReference>
<dbReference type="GO" id="GO:0033739">
    <property type="term" value="F:preQ1 synthase activity"/>
    <property type="evidence" value="ECO:0007669"/>
    <property type="project" value="UniProtKB-UniRule"/>
</dbReference>
<dbReference type="GO" id="GO:0008616">
    <property type="term" value="P:queuosine biosynthetic process"/>
    <property type="evidence" value="ECO:0007669"/>
    <property type="project" value="UniProtKB-UniRule"/>
</dbReference>
<dbReference type="GO" id="GO:0006400">
    <property type="term" value="P:tRNA modification"/>
    <property type="evidence" value="ECO:0007669"/>
    <property type="project" value="UniProtKB-UniRule"/>
</dbReference>
<dbReference type="Gene3D" id="3.30.1130.10">
    <property type="match status" value="2"/>
</dbReference>
<dbReference type="HAMAP" id="MF_00817">
    <property type="entry name" value="QueF_type2"/>
    <property type="match status" value="1"/>
</dbReference>
<dbReference type="InterPro" id="IPR043133">
    <property type="entry name" value="GTP-CH-I_C/QueF"/>
</dbReference>
<dbReference type="InterPro" id="IPR050084">
    <property type="entry name" value="NADPH_dep_7-cyano-7-deazaG_red"/>
</dbReference>
<dbReference type="InterPro" id="IPR029500">
    <property type="entry name" value="QueF"/>
</dbReference>
<dbReference type="InterPro" id="IPR029139">
    <property type="entry name" value="QueF_N"/>
</dbReference>
<dbReference type="InterPro" id="IPR016428">
    <property type="entry name" value="QueF_type2"/>
</dbReference>
<dbReference type="NCBIfam" id="TIGR03138">
    <property type="entry name" value="QueF"/>
    <property type="match status" value="1"/>
</dbReference>
<dbReference type="PANTHER" id="PTHR34354">
    <property type="entry name" value="NADPH-DEPENDENT 7-CYANO-7-DEAZAGUANINE REDUCTASE"/>
    <property type="match status" value="1"/>
</dbReference>
<dbReference type="PANTHER" id="PTHR34354:SF1">
    <property type="entry name" value="NADPH-DEPENDENT 7-CYANO-7-DEAZAGUANINE REDUCTASE"/>
    <property type="match status" value="1"/>
</dbReference>
<dbReference type="Pfam" id="PF14489">
    <property type="entry name" value="QueF"/>
    <property type="match status" value="1"/>
</dbReference>
<dbReference type="Pfam" id="PF14819">
    <property type="entry name" value="QueF_N"/>
    <property type="match status" value="1"/>
</dbReference>
<dbReference type="PIRSF" id="PIRSF004750">
    <property type="entry name" value="Nitrile_oxidored_YqcD_prd"/>
    <property type="match status" value="1"/>
</dbReference>
<dbReference type="SUPFAM" id="SSF55620">
    <property type="entry name" value="Tetrahydrobiopterin biosynthesis enzymes-like"/>
    <property type="match status" value="1"/>
</dbReference>
<accession>A6V3T3</accession>
<name>QUEF_PSEP7</name>
<feature type="chain" id="PRO_1000062350" description="NADPH-dependent 7-cyano-7-deazaguanine reductase">
    <location>
        <begin position="1"/>
        <end position="276"/>
    </location>
</feature>
<feature type="active site" description="Thioimide intermediate" evidence="1">
    <location>
        <position position="184"/>
    </location>
</feature>
<feature type="active site" description="Proton donor" evidence="1">
    <location>
        <position position="191"/>
    </location>
</feature>
<feature type="binding site" evidence="1">
    <location>
        <begin position="83"/>
        <end position="85"/>
    </location>
    <ligand>
        <name>substrate</name>
    </ligand>
</feature>
<feature type="binding site" evidence="1">
    <location>
        <begin position="85"/>
        <end position="86"/>
    </location>
    <ligand>
        <name>NADPH</name>
        <dbReference type="ChEBI" id="CHEBI:57783"/>
    </ligand>
</feature>
<feature type="binding site" evidence="1">
    <location>
        <begin position="223"/>
        <end position="224"/>
    </location>
    <ligand>
        <name>substrate</name>
    </ligand>
</feature>
<feature type="binding site" evidence="1">
    <location>
        <begin position="252"/>
        <end position="253"/>
    </location>
    <ligand>
        <name>NADPH</name>
        <dbReference type="ChEBI" id="CHEBI:57783"/>
    </ligand>
</feature>
<gene>
    <name evidence="1" type="primary">queF</name>
    <name type="ordered locus">PSPA7_2351</name>
</gene>